<sequence>MSAPRETIAAVATAQGRGGVGIVRISGPLASVAAKAISGRELKPRFAHYGPFFSDNQQVLDEGLALYFPGPNSFTGEDVLELQGHGGPIVLDMLLKRCLELGCRLARPGEFSERAFLNDKLDLAQAEAIADLIEASSAQAARNALRSLQGAFSQRVHNLTEQLIGLRIYVEAAIDFPEEEIDFLADGHVLSMLDKVRNELSTVLREAGQGALLRDGMTVVIAGRPNAGKSSLLNALAGREAAIVTEIAGTTRDILREHIHIDGMPLHVVDTAGLRDTDDHVEKIGVERALKAIGEADRVLLVVDATAPEAADPFALWPEFLETRPDPAKVTLIRNKADLTGEPIALEVSDDGHVTISLSAKSAGEGLDLLRDHLKACMGYEQTSESSFSARRRHLEALRHASDALEHGRAQLTLAGAGELLAEDLRQAQQSLGEITGAFSSDDLLGRIFSSFCIGK</sequence>
<gene>
    <name evidence="1" type="primary">mnmE</name>
    <name evidence="1" type="synonym">trmE</name>
    <name type="ordered locus">Pfl01_5742</name>
</gene>
<comment type="function">
    <text evidence="1">Exhibits a very high intrinsic GTPase hydrolysis rate. Involved in the addition of a carboxymethylaminomethyl (cmnm) group at the wobble position (U34) of certain tRNAs, forming tRNA-cmnm(5)s(2)U34.</text>
</comment>
<comment type="cofactor">
    <cofactor evidence="1">
        <name>K(+)</name>
        <dbReference type="ChEBI" id="CHEBI:29103"/>
    </cofactor>
    <text evidence="1">Binds 1 potassium ion per subunit.</text>
</comment>
<comment type="subunit">
    <text evidence="1">Homodimer. Heterotetramer of two MnmE and two MnmG subunits.</text>
</comment>
<comment type="subcellular location">
    <subcellularLocation>
        <location evidence="1">Cytoplasm</location>
    </subcellularLocation>
</comment>
<comment type="similarity">
    <text evidence="1">Belongs to the TRAFAC class TrmE-Era-EngA-EngB-Septin-like GTPase superfamily. TrmE GTPase family.</text>
</comment>
<dbReference type="EC" id="3.6.-.-" evidence="1"/>
<dbReference type="EMBL" id="CP000094">
    <property type="protein sequence ID" value="ABA77475.1"/>
    <property type="molecule type" value="Genomic_DNA"/>
</dbReference>
<dbReference type="RefSeq" id="WP_011336723.1">
    <property type="nucleotide sequence ID" value="NC_007492.2"/>
</dbReference>
<dbReference type="SMR" id="Q3K429"/>
<dbReference type="KEGG" id="pfo:Pfl01_5742"/>
<dbReference type="eggNOG" id="COG0486">
    <property type="taxonomic scope" value="Bacteria"/>
</dbReference>
<dbReference type="HOGENOM" id="CLU_019624_4_1_6"/>
<dbReference type="Proteomes" id="UP000002704">
    <property type="component" value="Chromosome"/>
</dbReference>
<dbReference type="GO" id="GO:0005829">
    <property type="term" value="C:cytosol"/>
    <property type="evidence" value="ECO:0007669"/>
    <property type="project" value="TreeGrafter"/>
</dbReference>
<dbReference type="GO" id="GO:0005525">
    <property type="term" value="F:GTP binding"/>
    <property type="evidence" value="ECO:0007669"/>
    <property type="project" value="UniProtKB-UniRule"/>
</dbReference>
<dbReference type="GO" id="GO:0003924">
    <property type="term" value="F:GTPase activity"/>
    <property type="evidence" value="ECO:0007669"/>
    <property type="project" value="UniProtKB-UniRule"/>
</dbReference>
<dbReference type="GO" id="GO:0046872">
    <property type="term" value="F:metal ion binding"/>
    <property type="evidence" value="ECO:0007669"/>
    <property type="project" value="UniProtKB-KW"/>
</dbReference>
<dbReference type="GO" id="GO:0030488">
    <property type="term" value="P:tRNA methylation"/>
    <property type="evidence" value="ECO:0007669"/>
    <property type="project" value="TreeGrafter"/>
</dbReference>
<dbReference type="GO" id="GO:0002098">
    <property type="term" value="P:tRNA wobble uridine modification"/>
    <property type="evidence" value="ECO:0007669"/>
    <property type="project" value="TreeGrafter"/>
</dbReference>
<dbReference type="CDD" id="cd04164">
    <property type="entry name" value="trmE"/>
    <property type="match status" value="1"/>
</dbReference>
<dbReference type="CDD" id="cd14858">
    <property type="entry name" value="TrmE_N"/>
    <property type="match status" value="1"/>
</dbReference>
<dbReference type="FunFam" id="3.30.1360.120:FF:000001">
    <property type="entry name" value="tRNA modification GTPase MnmE"/>
    <property type="match status" value="1"/>
</dbReference>
<dbReference type="FunFam" id="3.40.50.300:FF:000249">
    <property type="entry name" value="tRNA modification GTPase MnmE"/>
    <property type="match status" value="1"/>
</dbReference>
<dbReference type="Gene3D" id="3.40.50.300">
    <property type="entry name" value="P-loop containing nucleotide triphosphate hydrolases"/>
    <property type="match status" value="1"/>
</dbReference>
<dbReference type="Gene3D" id="3.30.1360.120">
    <property type="entry name" value="Probable tRNA modification gtpase trme, domain 1"/>
    <property type="match status" value="1"/>
</dbReference>
<dbReference type="Gene3D" id="1.20.120.430">
    <property type="entry name" value="tRNA modification GTPase MnmE domain 2"/>
    <property type="match status" value="1"/>
</dbReference>
<dbReference type="HAMAP" id="MF_00379">
    <property type="entry name" value="GTPase_MnmE"/>
    <property type="match status" value="1"/>
</dbReference>
<dbReference type="InterPro" id="IPR031168">
    <property type="entry name" value="G_TrmE"/>
</dbReference>
<dbReference type="InterPro" id="IPR006073">
    <property type="entry name" value="GTP-bd"/>
</dbReference>
<dbReference type="InterPro" id="IPR018948">
    <property type="entry name" value="GTP-bd_TrmE_N"/>
</dbReference>
<dbReference type="InterPro" id="IPR004520">
    <property type="entry name" value="GTPase_MnmE"/>
</dbReference>
<dbReference type="InterPro" id="IPR027368">
    <property type="entry name" value="MnmE_dom2"/>
</dbReference>
<dbReference type="InterPro" id="IPR025867">
    <property type="entry name" value="MnmE_helical"/>
</dbReference>
<dbReference type="InterPro" id="IPR027417">
    <property type="entry name" value="P-loop_NTPase"/>
</dbReference>
<dbReference type="InterPro" id="IPR005225">
    <property type="entry name" value="Small_GTP-bd"/>
</dbReference>
<dbReference type="InterPro" id="IPR027266">
    <property type="entry name" value="TrmE/GcvT_dom1"/>
</dbReference>
<dbReference type="NCBIfam" id="TIGR00450">
    <property type="entry name" value="mnmE_trmE_thdF"/>
    <property type="match status" value="1"/>
</dbReference>
<dbReference type="NCBIfam" id="NF003661">
    <property type="entry name" value="PRK05291.1-3"/>
    <property type="match status" value="1"/>
</dbReference>
<dbReference type="NCBIfam" id="TIGR00231">
    <property type="entry name" value="small_GTP"/>
    <property type="match status" value="1"/>
</dbReference>
<dbReference type="PANTHER" id="PTHR42714">
    <property type="entry name" value="TRNA MODIFICATION GTPASE GTPBP3"/>
    <property type="match status" value="1"/>
</dbReference>
<dbReference type="PANTHER" id="PTHR42714:SF2">
    <property type="entry name" value="TRNA MODIFICATION GTPASE GTPBP3, MITOCHONDRIAL"/>
    <property type="match status" value="1"/>
</dbReference>
<dbReference type="Pfam" id="PF01926">
    <property type="entry name" value="MMR_HSR1"/>
    <property type="match status" value="1"/>
</dbReference>
<dbReference type="Pfam" id="PF12631">
    <property type="entry name" value="MnmE_helical"/>
    <property type="match status" value="1"/>
</dbReference>
<dbReference type="Pfam" id="PF10396">
    <property type="entry name" value="TrmE_N"/>
    <property type="match status" value="1"/>
</dbReference>
<dbReference type="PRINTS" id="PR00326">
    <property type="entry name" value="GTP1OBG"/>
</dbReference>
<dbReference type="SUPFAM" id="SSF52540">
    <property type="entry name" value="P-loop containing nucleoside triphosphate hydrolases"/>
    <property type="match status" value="1"/>
</dbReference>
<dbReference type="SUPFAM" id="SSF116878">
    <property type="entry name" value="TrmE connector domain"/>
    <property type="match status" value="1"/>
</dbReference>
<dbReference type="PROSITE" id="PS51709">
    <property type="entry name" value="G_TRME"/>
    <property type="match status" value="1"/>
</dbReference>
<keyword id="KW-0963">Cytoplasm</keyword>
<keyword id="KW-0342">GTP-binding</keyword>
<keyword id="KW-0378">Hydrolase</keyword>
<keyword id="KW-0460">Magnesium</keyword>
<keyword id="KW-0479">Metal-binding</keyword>
<keyword id="KW-0547">Nucleotide-binding</keyword>
<keyword id="KW-0630">Potassium</keyword>
<keyword id="KW-0819">tRNA processing</keyword>
<protein>
    <recommendedName>
        <fullName evidence="1">tRNA modification GTPase MnmE</fullName>
        <ecNumber evidence="1">3.6.-.-</ecNumber>
    </recommendedName>
</protein>
<accession>Q3K429</accession>
<name>MNME_PSEPF</name>
<feature type="chain" id="PRO_1000048859" description="tRNA modification GTPase MnmE">
    <location>
        <begin position="1"/>
        <end position="456"/>
    </location>
</feature>
<feature type="domain" description="TrmE-type G">
    <location>
        <begin position="216"/>
        <end position="379"/>
    </location>
</feature>
<feature type="binding site" evidence="1">
    <location>
        <position position="24"/>
    </location>
    <ligand>
        <name>(6S)-5-formyl-5,6,7,8-tetrahydrofolate</name>
        <dbReference type="ChEBI" id="CHEBI:57457"/>
    </ligand>
</feature>
<feature type="binding site" evidence="1">
    <location>
        <position position="81"/>
    </location>
    <ligand>
        <name>(6S)-5-formyl-5,6,7,8-tetrahydrofolate</name>
        <dbReference type="ChEBI" id="CHEBI:57457"/>
    </ligand>
</feature>
<feature type="binding site" evidence="1">
    <location>
        <position position="120"/>
    </location>
    <ligand>
        <name>(6S)-5-formyl-5,6,7,8-tetrahydrofolate</name>
        <dbReference type="ChEBI" id="CHEBI:57457"/>
    </ligand>
</feature>
<feature type="binding site" evidence="1">
    <location>
        <begin position="226"/>
        <end position="231"/>
    </location>
    <ligand>
        <name>GTP</name>
        <dbReference type="ChEBI" id="CHEBI:37565"/>
    </ligand>
</feature>
<feature type="binding site" evidence="1">
    <location>
        <position position="226"/>
    </location>
    <ligand>
        <name>K(+)</name>
        <dbReference type="ChEBI" id="CHEBI:29103"/>
    </ligand>
</feature>
<feature type="binding site" evidence="1">
    <location>
        <position position="230"/>
    </location>
    <ligand>
        <name>Mg(2+)</name>
        <dbReference type="ChEBI" id="CHEBI:18420"/>
    </ligand>
</feature>
<feature type="binding site" evidence="1">
    <location>
        <begin position="245"/>
        <end position="251"/>
    </location>
    <ligand>
        <name>GTP</name>
        <dbReference type="ChEBI" id="CHEBI:37565"/>
    </ligand>
</feature>
<feature type="binding site" evidence="1">
    <location>
        <position position="245"/>
    </location>
    <ligand>
        <name>K(+)</name>
        <dbReference type="ChEBI" id="CHEBI:29103"/>
    </ligand>
</feature>
<feature type="binding site" evidence="1">
    <location>
        <position position="247"/>
    </location>
    <ligand>
        <name>K(+)</name>
        <dbReference type="ChEBI" id="CHEBI:29103"/>
    </ligand>
</feature>
<feature type="binding site" evidence="1">
    <location>
        <position position="250"/>
    </location>
    <ligand>
        <name>K(+)</name>
        <dbReference type="ChEBI" id="CHEBI:29103"/>
    </ligand>
</feature>
<feature type="binding site" evidence="1">
    <location>
        <position position="251"/>
    </location>
    <ligand>
        <name>Mg(2+)</name>
        <dbReference type="ChEBI" id="CHEBI:18420"/>
    </ligand>
</feature>
<feature type="binding site" evidence="1">
    <location>
        <begin position="270"/>
        <end position="273"/>
    </location>
    <ligand>
        <name>GTP</name>
        <dbReference type="ChEBI" id="CHEBI:37565"/>
    </ligand>
</feature>
<feature type="binding site" evidence="1">
    <location>
        <begin position="335"/>
        <end position="338"/>
    </location>
    <ligand>
        <name>GTP</name>
        <dbReference type="ChEBI" id="CHEBI:37565"/>
    </ligand>
</feature>
<feature type="binding site" evidence="1">
    <location>
        <position position="456"/>
    </location>
    <ligand>
        <name>(6S)-5-formyl-5,6,7,8-tetrahydrofolate</name>
        <dbReference type="ChEBI" id="CHEBI:57457"/>
    </ligand>
</feature>
<organism>
    <name type="scientific">Pseudomonas fluorescens (strain Pf0-1)</name>
    <dbReference type="NCBI Taxonomy" id="205922"/>
    <lineage>
        <taxon>Bacteria</taxon>
        <taxon>Pseudomonadati</taxon>
        <taxon>Pseudomonadota</taxon>
        <taxon>Gammaproteobacteria</taxon>
        <taxon>Pseudomonadales</taxon>
        <taxon>Pseudomonadaceae</taxon>
        <taxon>Pseudomonas</taxon>
    </lineage>
</organism>
<reference key="1">
    <citation type="journal article" date="2009" name="Genome Biol.">
        <title>Genomic and genetic analyses of diversity and plant interactions of Pseudomonas fluorescens.</title>
        <authorList>
            <person name="Silby M.W."/>
            <person name="Cerdeno-Tarraga A.M."/>
            <person name="Vernikos G.S."/>
            <person name="Giddens S.R."/>
            <person name="Jackson R.W."/>
            <person name="Preston G.M."/>
            <person name="Zhang X.-X."/>
            <person name="Moon C.D."/>
            <person name="Gehrig S.M."/>
            <person name="Godfrey S.A.C."/>
            <person name="Knight C.G."/>
            <person name="Malone J.G."/>
            <person name="Robinson Z."/>
            <person name="Spiers A.J."/>
            <person name="Harris S."/>
            <person name="Challis G.L."/>
            <person name="Yaxley A.M."/>
            <person name="Harris D."/>
            <person name="Seeger K."/>
            <person name="Murphy L."/>
            <person name="Rutter S."/>
            <person name="Squares R."/>
            <person name="Quail M.A."/>
            <person name="Saunders E."/>
            <person name="Mavromatis K."/>
            <person name="Brettin T.S."/>
            <person name="Bentley S.D."/>
            <person name="Hothersall J."/>
            <person name="Stephens E."/>
            <person name="Thomas C.M."/>
            <person name="Parkhill J."/>
            <person name="Levy S.B."/>
            <person name="Rainey P.B."/>
            <person name="Thomson N.R."/>
        </authorList>
    </citation>
    <scope>NUCLEOTIDE SEQUENCE [LARGE SCALE GENOMIC DNA]</scope>
    <source>
        <strain>Pf0-1</strain>
    </source>
</reference>
<proteinExistence type="inferred from homology"/>
<evidence type="ECO:0000255" key="1">
    <source>
        <dbReference type="HAMAP-Rule" id="MF_00379"/>
    </source>
</evidence>